<reference key="1">
    <citation type="journal article" date="2008" name="J. Bacteriol.">
        <title>Genome sequence of the chemolithoautotrophic bacterium Oligotropha carboxidovorans OM5T.</title>
        <authorList>
            <person name="Paul D."/>
            <person name="Bridges S."/>
            <person name="Burgess S.C."/>
            <person name="Dandass Y."/>
            <person name="Lawrence M.L."/>
        </authorList>
    </citation>
    <scope>NUCLEOTIDE SEQUENCE [LARGE SCALE GENOMIC DNA]</scope>
    <source>
        <strain>ATCC 49405 / DSM 1227 / KCTC 32145 / OM5</strain>
    </source>
</reference>
<reference key="2">
    <citation type="journal article" date="2011" name="J. Bacteriol.">
        <title>Complete genome sequences of the chemolithoautotrophic Oligotropha carboxidovorans strains OM4 and OM5.</title>
        <authorList>
            <person name="Volland S."/>
            <person name="Rachinger M."/>
            <person name="Strittmatter A."/>
            <person name="Daniel R."/>
            <person name="Gottschalk G."/>
            <person name="Meyer O."/>
        </authorList>
    </citation>
    <scope>NUCLEOTIDE SEQUENCE [LARGE SCALE GENOMIC DNA]</scope>
    <source>
        <strain>ATCC 49405 / DSM 1227 / KCTC 32145 / OM5</strain>
    </source>
</reference>
<protein>
    <recommendedName>
        <fullName evidence="1">Large ribosomal subunit protein uL6</fullName>
    </recommendedName>
    <alternativeName>
        <fullName evidence="2">50S ribosomal protein L6</fullName>
    </alternativeName>
</protein>
<comment type="function">
    <text evidence="1">This protein binds to the 23S rRNA, and is important in its secondary structure. It is located near the subunit interface in the base of the L7/L12 stalk, and near the tRNA binding site of the peptidyltransferase center.</text>
</comment>
<comment type="subunit">
    <text evidence="1">Part of the 50S ribosomal subunit.</text>
</comment>
<comment type="similarity">
    <text evidence="1">Belongs to the universal ribosomal protein uL6 family.</text>
</comment>
<gene>
    <name evidence="1" type="primary">rplF</name>
    <name type="ordered locus">OCAR_5692</name>
    <name type="ordered locus">OCA5_c23150</name>
</gene>
<organism>
    <name type="scientific">Afipia carboxidovorans (strain ATCC 49405 / DSM 1227 / KCTC 32145 / OM5)</name>
    <name type="common">Oligotropha carboxidovorans</name>
    <dbReference type="NCBI Taxonomy" id="504832"/>
    <lineage>
        <taxon>Bacteria</taxon>
        <taxon>Pseudomonadati</taxon>
        <taxon>Pseudomonadota</taxon>
        <taxon>Alphaproteobacteria</taxon>
        <taxon>Hyphomicrobiales</taxon>
        <taxon>Nitrobacteraceae</taxon>
        <taxon>Afipia</taxon>
    </lineage>
</organism>
<proteinExistence type="inferred from homology"/>
<sequence>MSRVGKRPVAIASGVTANVEGQTVKVKGPKGTRSFTVHDDVSVELKDNVIRVAPRFETKRAQSLYGTARAQIANLVEGVTKGFEKKLEITGVGYRAALQGKNLQLSLGYSHDVVYPVPEGITITVPKPTEITVAGIDSQRVGQVAAEIRGYRPPEPYKGKGVKYANEFIFRKEGKKK</sequence>
<accession>B6JEY0</accession>
<accession>F8BZB2</accession>
<name>RL6_AFIC5</name>
<feature type="chain" id="PRO_1000144023" description="Large ribosomal subunit protein uL6">
    <location>
        <begin position="1"/>
        <end position="177"/>
    </location>
</feature>
<evidence type="ECO:0000255" key="1">
    <source>
        <dbReference type="HAMAP-Rule" id="MF_01365"/>
    </source>
</evidence>
<evidence type="ECO:0000305" key="2"/>
<dbReference type="EMBL" id="CP001196">
    <property type="protein sequence ID" value="ACI92820.1"/>
    <property type="molecule type" value="Genomic_DNA"/>
</dbReference>
<dbReference type="EMBL" id="CP002826">
    <property type="protein sequence ID" value="AEI07015.1"/>
    <property type="molecule type" value="Genomic_DNA"/>
</dbReference>
<dbReference type="RefSeq" id="WP_012562849.1">
    <property type="nucleotide sequence ID" value="NC_015684.1"/>
</dbReference>
<dbReference type="SMR" id="B6JEY0"/>
<dbReference type="STRING" id="504832.OCA5_c23150"/>
<dbReference type="KEGG" id="oca:OCAR_5692"/>
<dbReference type="KEGG" id="ocg:OCA5_c23150"/>
<dbReference type="PATRIC" id="fig|504832.7.peg.2440"/>
<dbReference type="eggNOG" id="COG0097">
    <property type="taxonomic scope" value="Bacteria"/>
</dbReference>
<dbReference type="HOGENOM" id="CLU_065464_1_2_5"/>
<dbReference type="OrthoDB" id="9805007at2"/>
<dbReference type="Proteomes" id="UP000007730">
    <property type="component" value="Chromosome"/>
</dbReference>
<dbReference type="GO" id="GO:0022625">
    <property type="term" value="C:cytosolic large ribosomal subunit"/>
    <property type="evidence" value="ECO:0007669"/>
    <property type="project" value="TreeGrafter"/>
</dbReference>
<dbReference type="GO" id="GO:0019843">
    <property type="term" value="F:rRNA binding"/>
    <property type="evidence" value="ECO:0007669"/>
    <property type="project" value="UniProtKB-UniRule"/>
</dbReference>
<dbReference type="GO" id="GO:0003735">
    <property type="term" value="F:structural constituent of ribosome"/>
    <property type="evidence" value="ECO:0007669"/>
    <property type="project" value="InterPro"/>
</dbReference>
<dbReference type="GO" id="GO:0002181">
    <property type="term" value="P:cytoplasmic translation"/>
    <property type="evidence" value="ECO:0007669"/>
    <property type="project" value="TreeGrafter"/>
</dbReference>
<dbReference type="FunFam" id="3.90.930.12:FF:000001">
    <property type="entry name" value="50S ribosomal protein L6"/>
    <property type="match status" value="1"/>
</dbReference>
<dbReference type="Gene3D" id="3.90.930.12">
    <property type="entry name" value="Ribosomal protein L6, alpha-beta domain"/>
    <property type="match status" value="2"/>
</dbReference>
<dbReference type="HAMAP" id="MF_01365_B">
    <property type="entry name" value="Ribosomal_uL6_B"/>
    <property type="match status" value="1"/>
</dbReference>
<dbReference type="InterPro" id="IPR000702">
    <property type="entry name" value="Ribosomal_uL6-like"/>
</dbReference>
<dbReference type="InterPro" id="IPR036789">
    <property type="entry name" value="Ribosomal_uL6-like_a/b-dom_sf"/>
</dbReference>
<dbReference type="InterPro" id="IPR020040">
    <property type="entry name" value="Ribosomal_uL6_a/b-dom"/>
</dbReference>
<dbReference type="InterPro" id="IPR019906">
    <property type="entry name" value="Ribosomal_uL6_bac-type"/>
</dbReference>
<dbReference type="InterPro" id="IPR002358">
    <property type="entry name" value="Ribosomal_uL6_CS"/>
</dbReference>
<dbReference type="NCBIfam" id="TIGR03654">
    <property type="entry name" value="L6_bact"/>
    <property type="match status" value="1"/>
</dbReference>
<dbReference type="PANTHER" id="PTHR11655">
    <property type="entry name" value="60S/50S RIBOSOMAL PROTEIN L6/L9"/>
    <property type="match status" value="1"/>
</dbReference>
<dbReference type="PANTHER" id="PTHR11655:SF14">
    <property type="entry name" value="LARGE RIBOSOMAL SUBUNIT PROTEIN UL6M"/>
    <property type="match status" value="1"/>
</dbReference>
<dbReference type="Pfam" id="PF00347">
    <property type="entry name" value="Ribosomal_L6"/>
    <property type="match status" value="2"/>
</dbReference>
<dbReference type="PIRSF" id="PIRSF002162">
    <property type="entry name" value="Ribosomal_L6"/>
    <property type="match status" value="1"/>
</dbReference>
<dbReference type="PRINTS" id="PR00059">
    <property type="entry name" value="RIBOSOMALL6"/>
</dbReference>
<dbReference type="SUPFAM" id="SSF56053">
    <property type="entry name" value="Ribosomal protein L6"/>
    <property type="match status" value="2"/>
</dbReference>
<dbReference type="PROSITE" id="PS00525">
    <property type="entry name" value="RIBOSOMAL_L6_1"/>
    <property type="match status" value="1"/>
</dbReference>
<keyword id="KW-1185">Reference proteome</keyword>
<keyword id="KW-0687">Ribonucleoprotein</keyword>
<keyword id="KW-0689">Ribosomal protein</keyword>
<keyword id="KW-0694">RNA-binding</keyword>
<keyword id="KW-0699">rRNA-binding</keyword>